<organismHost>
    <name type="scientific">Homo sapiens</name>
    <name type="common">Human</name>
    <dbReference type="NCBI Taxonomy" id="9606"/>
</organismHost>
<organism>
    <name type="scientific">Human adenovirus A serotype 12</name>
    <name type="common">HAdV-12</name>
    <name type="synonym">Human adenovirus 12</name>
    <dbReference type="NCBI Taxonomy" id="28282"/>
    <lineage>
        <taxon>Viruses</taxon>
        <taxon>Varidnaviria</taxon>
        <taxon>Bamfordvirae</taxon>
        <taxon>Preplasmiviricota</taxon>
        <taxon>Tectiliviricetes</taxon>
        <taxon>Rowavirales</taxon>
        <taxon>Adenoviridae</taxon>
        <taxon>Mastadenovirus</taxon>
        <taxon>Human mastadenovirus A</taxon>
    </lineage>
</organism>
<sequence>MGSSEQELTAIVRDLGCGPYFLGTFDKRFPGFVSRDRLSCAIVNTAGRETGGVHWLAFGWNPKSHTCYLFDPFGFSDQRLKQIYQFEYESLLRRSALAATKDRCVTLEKSTQTVQGPFSAACGLFCCMFLHAFTHWPDHPMDKNPTMDLLTGVPNCMLQSPQVVGTLQRNQNELYKFLNNLSPYFRHNRERIEKATSFTKMQNGLK</sequence>
<evidence type="ECO:0000255" key="1">
    <source>
        <dbReference type="HAMAP-Rule" id="MF_04059"/>
    </source>
</evidence>
<proteinExistence type="inferred from homology"/>
<comment type="function">
    <text evidence="1">Cleaves viral precursor proteins (pTP, pIIIa, pVI, pVII, pVIII, and pX) inside newly assembled particles giving rise to mature virions. Protease complexed to its cofactor slides along the viral DNA to specifically locate and cleave the viral precursors. Mature virions have a weakened organization compared to the unmature virions, thereby facilitating subsequent uncoating. Without maturation, the particle lacks infectivity and is unable to uncoat. Late in adenovirus infection, in the cytoplasm, may participate in the cytoskeleton destruction. Cleaves host cell cytoskeletal keratins K7 and K18.</text>
</comment>
<comment type="catalytic activity">
    <reaction evidence="1">
        <text>Cleaves proteins of the adenovirus and its host cell at two consensus sites: -Yaa-Xaa-Gly-Gly-|-Xaa- and -Yaa-Xaa-Gly-Xaa-|-Gly- (in which Yaa is Met, Ile or Leu, and Xaa is any amino acid).</text>
        <dbReference type="EC" id="3.4.22.39"/>
    </reaction>
</comment>
<comment type="activity regulation">
    <text evidence="1">Requires DNA and protease cofactor for maximal activation. Inside nascent virions, becomes partially activated by binding to the viral DNA, allowing it to cleave the cofactor that binds to the protease and fully activates it. Actin, like the viral protease cofactor, seems to act as a cofactor in the cleavage of cytokeratin 18 and of actin itself.</text>
</comment>
<comment type="subunit">
    <text evidence="1">Interacts with protease cofactor pVI-C; this interaction is necessary for protease activation.</text>
</comment>
<comment type="subcellular location">
    <subcellularLocation>
        <location evidence="1">Virion</location>
    </subcellularLocation>
    <subcellularLocation>
        <location evidence="1">Host nucleus</location>
    </subcellularLocation>
    <text evidence="1">Present in about 10 copies per virion.</text>
</comment>
<comment type="induction">
    <text evidence="1">Expressed in the late phase of the viral replicative cycle.</text>
</comment>
<comment type="miscellaneous">
    <text evidence="1">All late proteins expressed from the major late promoter are produced by alternative splicing and alternative polyadenylation of the same gene giving rise to non-overlapping ORFs. A leader sequence is present in the N-terminus of all these mRNAs and is recognized by the viral shutoff protein to provide expression although conventional translation via ribosome scanning from the cap has been shut off in the host cell.</text>
</comment>
<comment type="similarity">
    <text evidence="1">Belongs to the peptidase C5 family.</text>
</comment>
<dbReference type="EC" id="3.4.22.39" evidence="1"/>
<dbReference type="EMBL" id="X07655">
    <property type="protein sequence ID" value="CAA30501.1"/>
    <property type="molecule type" value="Genomic_DNA"/>
</dbReference>
<dbReference type="EMBL" id="X73487">
    <property type="protein sequence ID" value="CAA51892.1"/>
    <property type="molecule type" value="Genomic_DNA"/>
</dbReference>
<dbReference type="PIR" id="S01731">
    <property type="entry name" value="W2AD12"/>
</dbReference>
<dbReference type="RefSeq" id="NP_040925.1">
    <property type="nucleotide sequence ID" value="NC_001460.1"/>
</dbReference>
<dbReference type="SMR" id="P09569"/>
<dbReference type="MEROPS" id="C05.001"/>
<dbReference type="GeneID" id="1460858"/>
<dbReference type="Proteomes" id="UP000004993">
    <property type="component" value="Genome"/>
</dbReference>
<dbReference type="GO" id="GO:0042025">
    <property type="term" value="C:host cell nucleus"/>
    <property type="evidence" value="ECO:0007669"/>
    <property type="project" value="UniProtKB-SubCell"/>
</dbReference>
<dbReference type="GO" id="GO:0044423">
    <property type="term" value="C:virion component"/>
    <property type="evidence" value="ECO:0007669"/>
    <property type="project" value="UniProtKB-UniRule"/>
</dbReference>
<dbReference type="GO" id="GO:0004197">
    <property type="term" value="F:cysteine-type endopeptidase activity"/>
    <property type="evidence" value="ECO:0007669"/>
    <property type="project" value="UniProtKB-UniRule"/>
</dbReference>
<dbReference type="GO" id="GO:0003677">
    <property type="term" value="F:DNA binding"/>
    <property type="evidence" value="ECO:0007669"/>
    <property type="project" value="UniProtKB-UniRule"/>
</dbReference>
<dbReference type="GO" id="GO:0006508">
    <property type="term" value="P:proteolysis"/>
    <property type="evidence" value="ECO:0007669"/>
    <property type="project" value="UniProtKB-KW"/>
</dbReference>
<dbReference type="Gene3D" id="3.40.395.10">
    <property type="entry name" value="Adenoviral Proteinase, Chain A"/>
    <property type="match status" value="1"/>
</dbReference>
<dbReference type="HAMAP" id="MF_04059">
    <property type="entry name" value="ADV_PRO"/>
    <property type="match status" value="1"/>
</dbReference>
<dbReference type="InterPro" id="IPR038765">
    <property type="entry name" value="Papain-like_cys_pep_sf"/>
</dbReference>
<dbReference type="InterPro" id="IPR000855">
    <property type="entry name" value="Peptidase_C5"/>
</dbReference>
<dbReference type="Pfam" id="PF00770">
    <property type="entry name" value="Peptidase_C5"/>
    <property type="match status" value="1"/>
</dbReference>
<dbReference type="PIRSF" id="PIRSF001218">
    <property type="entry name" value="Protease_ADV"/>
    <property type="match status" value="1"/>
</dbReference>
<dbReference type="PRINTS" id="PR00703">
    <property type="entry name" value="ADVENDOPTASE"/>
</dbReference>
<dbReference type="SUPFAM" id="SSF54001">
    <property type="entry name" value="Cysteine proteinases"/>
    <property type="match status" value="1"/>
</dbReference>
<feature type="chain" id="PRO_0000218028" description="Protease">
    <location>
        <begin position="1"/>
        <end position="206"/>
    </location>
</feature>
<feature type="active site" evidence="1">
    <location>
        <position position="54"/>
    </location>
</feature>
<feature type="active site" evidence="1">
    <location>
        <position position="71"/>
    </location>
</feature>
<feature type="active site" evidence="1">
    <location>
        <position position="122"/>
    </location>
</feature>
<feature type="site" description="Cleavage; by autolysis" evidence="1">
    <location>
        <begin position="51"/>
        <end position="52"/>
    </location>
</feature>
<feature type="disulfide bond" description="Interchain (with C-10 in cleaved protease cofactor pVI-C)" evidence="1">
    <location>
        <position position="104"/>
    </location>
</feature>
<feature type="sequence conflict" description="In Ref. 1; CAA30501." ref="1">
    <original>N</original>
    <variation>S</variation>
    <location>
        <position position="180"/>
    </location>
</feature>
<name>PRO_ADE12</name>
<accession>P09569</accession>
<keyword id="KW-0068">Autocatalytic cleavage</keyword>
<keyword id="KW-1015">Disulfide bond</keyword>
<keyword id="KW-0238">DNA-binding</keyword>
<keyword id="KW-1048">Host nucleus</keyword>
<keyword id="KW-0378">Hydrolase</keyword>
<keyword id="KW-0426">Late protein</keyword>
<keyword id="KW-0645">Protease</keyword>
<keyword id="KW-1185">Reference proteome</keyword>
<keyword id="KW-0788">Thiol protease</keyword>
<keyword id="KW-0946">Virion</keyword>
<gene>
    <name evidence="1" type="primary">L3</name>
</gene>
<protein>
    <recommendedName>
        <fullName evidence="1">Protease</fullName>
        <ecNumber evidence="1">3.4.22.39</ecNumber>
    </recommendedName>
    <alternativeName>
        <fullName evidence="1">Adenain</fullName>
    </alternativeName>
    <alternativeName>
        <fullName evidence="1">Adenovirus protease</fullName>
        <shortName evidence="1">AVP</shortName>
    </alternativeName>
    <alternativeName>
        <fullName evidence="1">Adenovirus proteinase</fullName>
    </alternativeName>
    <alternativeName>
        <fullName evidence="1">Endoprotease</fullName>
    </alternativeName>
</protein>
<reference key="1">
    <citation type="journal article" date="1988" name="Nucleic Acids Res.">
        <title>The primary structure of human adenovirus type 12 protease.</title>
        <authorList>
            <person name="Weber J.M."/>
            <person name="Houde A."/>
        </authorList>
    </citation>
    <scope>NUCLEOTIDE SEQUENCE [GENOMIC DNA]</scope>
    <source>
        <strain>Pereira 1131</strain>
    </source>
</reference>
<reference key="2">
    <citation type="journal article" date="1994" name="J. Virol.">
        <title>Nucleotide sequence of human adenovirus type 12 DNA: comparative functional analysis.</title>
        <authorList>
            <person name="Sprengel J."/>
            <person name="Schmitz B."/>
            <person name="Heuss-Neitzel D."/>
            <person name="Zock C."/>
            <person name="Doerfler W."/>
        </authorList>
    </citation>
    <scope>NUCLEOTIDE SEQUENCE [LARGE SCALE GENOMIC DNA]</scope>
</reference>